<proteinExistence type="inferred from homology"/>
<dbReference type="EC" id="2.8.4.3" evidence="1"/>
<dbReference type="EMBL" id="CP000100">
    <property type="protein sequence ID" value="ABB58404.1"/>
    <property type="molecule type" value="Genomic_DNA"/>
</dbReference>
<dbReference type="RefSeq" id="WP_011244041.1">
    <property type="nucleotide sequence ID" value="NZ_JACJTX010000001.1"/>
</dbReference>
<dbReference type="SMR" id="Q31KL5"/>
<dbReference type="STRING" id="1140.Synpcc7942_2374"/>
<dbReference type="PaxDb" id="1140-Synpcc7942_2374"/>
<dbReference type="GeneID" id="72431262"/>
<dbReference type="KEGG" id="syf:Synpcc7942_2374"/>
<dbReference type="eggNOG" id="COG0621">
    <property type="taxonomic scope" value="Bacteria"/>
</dbReference>
<dbReference type="HOGENOM" id="CLU_018697_2_2_3"/>
<dbReference type="OrthoDB" id="9805215at2"/>
<dbReference type="BioCyc" id="SYNEL:SYNPCC7942_2374-MONOMER"/>
<dbReference type="Proteomes" id="UP000889800">
    <property type="component" value="Chromosome"/>
</dbReference>
<dbReference type="GO" id="GO:0005737">
    <property type="term" value="C:cytoplasm"/>
    <property type="evidence" value="ECO:0007669"/>
    <property type="project" value="UniProtKB-SubCell"/>
</dbReference>
<dbReference type="GO" id="GO:0051539">
    <property type="term" value="F:4 iron, 4 sulfur cluster binding"/>
    <property type="evidence" value="ECO:0007669"/>
    <property type="project" value="UniProtKB-UniRule"/>
</dbReference>
<dbReference type="GO" id="GO:0046872">
    <property type="term" value="F:metal ion binding"/>
    <property type="evidence" value="ECO:0007669"/>
    <property type="project" value="UniProtKB-KW"/>
</dbReference>
<dbReference type="GO" id="GO:0035596">
    <property type="term" value="F:methylthiotransferase activity"/>
    <property type="evidence" value="ECO:0007669"/>
    <property type="project" value="InterPro"/>
</dbReference>
<dbReference type="GO" id="GO:0035600">
    <property type="term" value="P:tRNA methylthiolation"/>
    <property type="evidence" value="ECO:0007669"/>
    <property type="project" value="TreeGrafter"/>
</dbReference>
<dbReference type="CDD" id="cd01335">
    <property type="entry name" value="Radical_SAM"/>
    <property type="match status" value="1"/>
</dbReference>
<dbReference type="FunFam" id="3.40.50.12160:FF:000006">
    <property type="entry name" value="tRNA-2-methylthio-N(6)-dimethylallyladenosine synthase"/>
    <property type="match status" value="1"/>
</dbReference>
<dbReference type="FunFam" id="3.80.30.20:FF:000001">
    <property type="entry name" value="tRNA-2-methylthio-N(6)-dimethylallyladenosine synthase 2"/>
    <property type="match status" value="1"/>
</dbReference>
<dbReference type="Gene3D" id="3.40.50.12160">
    <property type="entry name" value="Methylthiotransferase, N-terminal domain"/>
    <property type="match status" value="1"/>
</dbReference>
<dbReference type="Gene3D" id="3.80.30.20">
    <property type="entry name" value="tm_1862 like domain"/>
    <property type="match status" value="1"/>
</dbReference>
<dbReference type="HAMAP" id="MF_01864">
    <property type="entry name" value="tRNA_metthiotr_MiaB"/>
    <property type="match status" value="1"/>
</dbReference>
<dbReference type="InterPro" id="IPR006638">
    <property type="entry name" value="Elp3/MiaA/NifB-like_rSAM"/>
</dbReference>
<dbReference type="InterPro" id="IPR005839">
    <property type="entry name" value="Methylthiotransferase"/>
</dbReference>
<dbReference type="InterPro" id="IPR020612">
    <property type="entry name" value="Methylthiotransferase_CS"/>
</dbReference>
<dbReference type="InterPro" id="IPR013848">
    <property type="entry name" value="Methylthiotransferase_N"/>
</dbReference>
<dbReference type="InterPro" id="IPR038135">
    <property type="entry name" value="Methylthiotransferase_N_sf"/>
</dbReference>
<dbReference type="InterPro" id="IPR006463">
    <property type="entry name" value="MiaB_methiolase"/>
</dbReference>
<dbReference type="InterPro" id="IPR007197">
    <property type="entry name" value="rSAM"/>
</dbReference>
<dbReference type="InterPro" id="IPR023404">
    <property type="entry name" value="rSAM_horseshoe"/>
</dbReference>
<dbReference type="InterPro" id="IPR002792">
    <property type="entry name" value="TRAM_dom"/>
</dbReference>
<dbReference type="NCBIfam" id="TIGR01574">
    <property type="entry name" value="miaB-methiolase"/>
    <property type="match status" value="1"/>
</dbReference>
<dbReference type="NCBIfam" id="TIGR00089">
    <property type="entry name" value="MiaB/RimO family radical SAM methylthiotransferase"/>
    <property type="match status" value="1"/>
</dbReference>
<dbReference type="PANTHER" id="PTHR43020">
    <property type="entry name" value="CDK5 REGULATORY SUBUNIT-ASSOCIATED PROTEIN 1"/>
    <property type="match status" value="1"/>
</dbReference>
<dbReference type="PANTHER" id="PTHR43020:SF2">
    <property type="entry name" value="MITOCHONDRIAL TRNA METHYLTHIOTRANSFERASE CDK5RAP1"/>
    <property type="match status" value="1"/>
</dbReference>
<dbReference type="Pfam" id="PF04055">
    <property type="entry name" value="Radical_SAM"/>
    <property type="match status" value="1"/>
</dbReference>
<dbReference type="Pfam" id="PF01938">
    <property type="entry name" value="TRAM"/>
    <property type="match status" value="1"/>
</dbReference>
<dbReference type="Pfam" id="PF00919">
    <property type="entry name" value="UPF0004"/>
    <property type="match status" value="1"/>
</dbReference>
<dbReference type="SFLD" id="SFLDF00273">
    <property type="entry name" value="(dimethylallyl)adenosine_tRNA"/>
    <property type="match status" value="1"/>
</dbReference>
<dbReference type="SFLD" id="SFLDG01082">
    <property type="entry name" value="B12-binding_domain_containing"/>
    <property type="match status" value="1"/>
</dbReference>
<dbReference type="SFLD" id="SFLDS00029">
    <property type="entry name" value="Radical_SAM"/>
    <property type="match status" value="1"/>
</dbReference>
<dbReference type="SMART" id="SM00729">
    <property type="entry name" value="Elp3"/>
    <property type="match status" value="1"/>
</dbReference>
<dbReference type="SUPFAM" id="SSF102114">
    <property type="entry name" value="Radical SAM enzymes"/>
    <property type="match status" value="1"/>
</dbReference>
<dbReference type="PROSITE" id="PS51449">
    <property type="entry name" value="MTTASE_N"/>
    <property type="match status" value="1"/>
</dbReference>
<dbReference type="PROSITE" id="PS01278">
    <property type="entry name" value="MTTASE_RADICAL"/>
    <property type="match status" value="1"/>
</dbReference>
<dbReference type="PROSITE" id="PS51918">
    <property type="entry name" value="RADICAL_SAM"/>
    <property type="match status" value="1"/>
</dbReference>
<dbReference type="PROSITE" id="PS50926">
    <property type="entry name" value="TRAM"/>
    <property type="match status" value="1"/>
</dbReference>
<name>MIAB_SYNE7</name>
<gene>
    <name evidence="1" type="primary">miaB</name>
    <name type="ordered locus">Synpcc7942_2374</name>
</gene>
<accession>Q31KL5</accession>
<comment type="function">
    <text evidence="1">Catalyzes the methylthiolation of N6-(dimethylallyl)adenosine (i(6)A), leading to the formation of 2-methylthio-N6-(dimethylallyl)adenosine (ms(2)i(6)A) at position 37 in tRNAs that read codons beginning with uridine.</text>
</comment>
<comment type="catalytic activity">
    <reaction evidence="1">
        <text>N(6)-dimethylallyladenosine(37) in tRNA + (sulfur carrier)-SH + AH2 + 2 S-adenosyl-L-methionine = 2-methylsulfanyl-N(6)-dimethylallyladenosine(37) in tRNA + (sulfur carrier)-H + 5'-deoxyadenosine + L-methionine + A + S-adenosyl-L-homocysteine + 2 H(+)</text>
        <dbReference type="Rhea" id="RHEA:37067"/>
        <dbReference type="Rhea" id="RHEA-COMP:10375"/>
        <dbReference type="Rhea" id="RHEA-COMP:10376"/>
        <dbReference type="Rhea" id="RHEA-COMP:14737"/>
        <dbReference type="Rhea" id="RHEA-COMP:14739"/>
        <dbReference type="ChEBI" id="CHEBI:13193"/>
        <dbReference type="ChEBI" id="CHEBI:15378"/>
        <dbReference type="ChEBI" id="CHEBI:17319"/>
        <dbReference type="ChEBI" id="CHEBI:17499"/>
        <dbReference type="ChEBI" id="CHEBI:29917"/>
        <dbReference type="ChEBI" id="CHEBI:57844"/>
        <dbReference type="ChEBI" id="CHEBI:57856"/>
        <dbReference type="ChEBI" id="CHEBI:59789"/>
        <dbReference type="ChEBI" id="CHEBI:64428"/>
        <dbReference type="ChEBI" id="CHEBI:74415"/>
        <dbReference type="ChEBI" id="CHEBI:74417"/>
        <dbReference type="EC" id="2.8.4.3"/>
    </reaction>
</comment>
<comment type="cofactor">
    <cofactor evidence="1">
        <name>[4Fe-4S] cluster</name>
        <dbReference type="ChEBI" id="CHEBI:49883"/>
    </cofactor>
    <text evidence="1">Binds 2 [4Fe-4S] clusters. One cluster is coordinated with 3 cysteines and an exchangeable S-adenosyl-L-methionine.</text>
</comment>
<comment type="subunit">
    <text evidence="1">Monomer.</text>
</comment>
<comment type="subcellular location">
    <subcellularLocation>
        <location evidence="1">Cytoplasm</location>
    </subcellularLocation>
</comment>
<comment type="similarity">
    <text evidence="1">Belongs to the methylthiotransferase family. MiaB subfamily.</text>
</comment>
<feature type="chain" id="PRO_0000374592" description="tRNA-2-methylthio-N(6)-dimethylallyladenosine synthase">
    <location>
        <begin position="1"/>
        <end position="452"/>
    </location>
</feature>
<feature type="domain" description="MTTase N-terminal" evidence="1">
    <location>
        <begin position="5"/>
        <end position="121"/>
    </location>
</feature>
<feature type="domain" description="Radical SAM core" evidence="2">
    <location>
        <begin position="142"/>
        <end position="379"/>
    </location>
</feature>
<feature type="domain" description="TRAM" evidence="1">
    <location>
        <begin position="382"/>
        <end position="446"/>
    </location>
</feature>
<feature type="binding site" evidence="1">
    <location>
        <position position="14"/>
    </location>
    <ligand>
        <name>[4Fe-4S] cluster</name>
        <dbReference type="ChEBI" id="CHEBI:49883"/>
        <label>1</label>
    </ligand>
</feature>
<feature type="binding site" evidence="1">
    <location>
        <position position="50"/>
    </location>
    <ligand>
        <name>[4Fe-4S] cluster</name>
        <dbReference type="ChEBI" id="CHEBI:49883"/>
        <label>1</label>
    </ligand>
</feature>
<feature type="binding site" evidence="1">
    <location>
        <position position="84"/>
    </location>
    <ligand>
        <name>[4Fe-4S] cluster</name>
        <dbReference type="ChEBI" id="CHEBI:49883"/>
        <label>1</label>
    </ligand>
</feature>
<feature type="binding site" evidence="1">
    <location>
        <position position="156"/>
    </location>
    <ligand>
        <name>[4Fe-4S] cluster</name>
        <dbReference type="ChEBI" id="CHEBI:49883"/>
        <label>2</label>
        <note>4Fe-4S-S-AdoMet</note>
    </ligand>
</feature>
<feature type="binding site" evidence="1">
    <location>
        <position position="160"/>
    </location>
    <ligand>
        <name>[4Fe-4S] cluster</name>
        <dbReference type="ChEBI" id="CHEBI:49883"/>
        <label>2</label>
        <note>4Fe-4S-S-AdoMet</note>
    </ligand>
</feature>
<feature type="binding site" evidence="1">
    <location>
        <position position="163"/>
    </location>
    <ligand>
        <name>[4Fe-4S] cluster</name>
        <dbReference type="ChEBI" id="CHEBI:49883"/>
        <label>2</label>
        <note>4Fe-4S-S-AdoMet</note>
    </ligand>
</feature>
<reference key="1">
    <citation type="submission" date="2005-08" db="EMBL/GenBank/DDBJ databases">
        <title>Complete sequence of chromosome 1 of Synechococcus elongatus PCC 7942.</title>
        <authorList>
            <consortium name="US DOE Joint Genome Institute"/>
            <person name="Copeland A."/>
            <person name="Lucas S."/>
            <person name="Lapidus A."/>
            <person name="Barry K."/>
            <person name="Detter J.C."/>
            <person name="Glavina T."/>
            <person name="Hammon N."/>
            <person name="Israni S."/>
            <person name="Pitluck S."/>
            <person name="Schmutz J."/>
            <person name="Larimer F."/>
            <person name="Land M."/>
            <person name="Kyrpides N."/>
            <person name="Lykidis A."/>
            <person name="Golden S."/>
            <person name="Richardson P."/>
        </authorList>
    </citation>
    <scope>NUCLEOTIDE SEQUENCE [LARGE SCALE GENOMIC DNA]</scope>
    <source>
        <strain>ATCC 33912 / PCC 7942 / FACHB-805</strain>
    </source>
</reference>
<evidence type="ECO:0000255" key="1">
    <source>
        <dbReference type="HAMAP-Rule" id="MF_01864"/>
    </source>
</evidence>
<evidence type="ECO:0000255" key="2">
    <source>
        <dbReference type="PROSITE-ProRule" id="PRU01266"/>
    </source>
</evidence>
<keyword id="KW-0004">4Fe-4S</keyword>
<keyword id="KW-0963">Cytoplasm</keyword>
<keyword id="KW-0408">Iron</keyword>
<keyword id="KW-0411">Iron-sulfur</keyword>
<keyword id="KW-0479">Metal-binding</keyword>
<keyword id="KW-1185">Reference proteome</keyword>
<keyword id="KW-0949">S-adenosyl-L-methionine</keyword>
<keyword id="KW-0808">Transferase</keyword>
<keyword id="KW-0819">tRNA processing</keyword>
<protein>
    <recommendedName>
        <fullName evidence="1">tRNA-2-methylthio-N(6)-dimethylallyladenosine synthase</fullName>
        <ecNumber evidence="1">2.8.4.3</ecNumber>
    </recommendedName>
    <alternativeName>
        <fullName evidence="1">(Dimethylallyl)adenosine tRNA methylthiotransferase MiaB</fullName>
    </alternativeName>
    <alternativeName>
        <fullName evidence="1">tRNA-i(6)A37 methylthiotransferase</fullName>
    </alternativeName>
</protein>
<organism>
    <name type="scientific">Synechococcus elongatus (strain ATCC 33912 / PCC 7942 / FACHB-805)</name>
    <name type="common">Anacystis nidulans R2</name>
    <dbReference type="NCBI Taxonomy" id="1140"/>
    <lineage>
        <taxon>Bacteria</taxon>
        <taxon>Bacillati</taxon>
        <taxon>Cyanobacteriota</taxon>
        <taxon>Cyanophyceae</taxon>
        <taxon>Synechococcales</taxon>
        <taxon>Synechococcaceae</taxon>
        <taxon>Synechococcus</taxon>
    </lineage>
</organism>
<sequence>MSTPRRYHITTFGCQMNKADSERMAGILEDLGYIWSEEANDADLVLYNTCTIRDNAEQKVYSYLGRQAERKRQQPDLTLIVAGCVAQQEGESLLRRVPELDLVMGPQHANRLADLLAQVEAGSQVVATEEVEIAEDITQPRRDSTITAWVNVIYGCNERCTYCVVPNVRGREQSREPAAIRAEIEQLAAQGYREITLLGQNIDAYGRDLPGSTPEGRHLHTLTDLLYTIHDVPGIERIRFATSHPRYFTERLIRACAELPKVCEYFHIPFQSGDNDVLKAMARGYTVERYLRIVEQIRDIIPDAAISADAIVAFPGETEEQFENTLKLVEQVGFDLVNTAAYSPRPGTPAANAPNQLSEEVKQDRLQRLNHLVAQMAADRSQRYLGRTEEVLIEATNPRNPQQVMGRTRTNRLVFCDGTIAQLEGQLVPVRITETRAFSLTGQILSPVAAGC</sequence>